<organism>
    <name type="scientific">Shewanella sp. (strain MR-4)</name>
    <dbReference type="NCBI Taxonomy" id="60480"/>
    <lineage>
        <taxon>Bacteria</taxon>
        <taxon>Pseudomonadati</taxon>
        <taxon>Pseudomonadota</taxon>
        <taxon>Gammaproteobacteria</taxon>
        <taxon>Alteromonadales</taxon>
        <taxon>Shewanellaceae</taxon>
        <taxon>Shewanella</taxon>
    </lineage>
</organism>
<keyword id="KW-0450">Lipoyl</keyword>
<evidence type="ECO:0000255" key="1">
    <source>
        <dbReference type="HAMAP-Rule" id="MF_00272"/>
    </source>
</evidence>
<evidence type="ECO:0000255" key="2">
    <source>
        <dbReference type="PROSITE-ProRule" id="PRU01066"/>
    </source>
</evidence>
<dbReference type="EMBL" id="CP000446">
    <property type="protein sequence ID" value="ABI40396.1"/>
    <property type="molecule type" value="Genomic_DNA"/>
</dbReference>
<dbReference type="RefSeq" id="WP_011071083.1">
    <property type="nucleotide sequence ID" value="NC_008321.1"/>
</dbReference>
<dbReference type="SMR" id="Q0HEX1"/>
<dbReference type="GeneID" id="94729424"/>
<dbReference type="KEGG" id="she:Shewmr4_3330"/>
<dbReference type="HOGENOM" id="CLU_097408_2_1_6"/>
<dbReference type="GO" id="GO:0005829">
    <property type="term" value="C:cytosol"/>
    <property type="evidence" value="ECO:0007669"/>
    <property type="project" value="TreeGrafter"/>
</dbReference>
<dbReference type="GO" id="GO:0005960">
    <property type="term" value="C:glycine cleavage complex"/>
    <property type="evidence" value="ECO:0007669"/>
    <property type="project" value="InterPro"/>
</dbReference>
<dbReference type="GO" id="GO:0019464">
    <property type="term" value="P:glycine decarboxylation via glycine cleavage system"/>
    <property type="evidence" value="ECO:0007669"/>
    <property type="project" value="UniProtKB-UniRule"/>
</dbReference>
<dbReference type="CDD" id="cd06848">
    <property type="entry name" value="GCS_H"/>
    <property type="match status" value="1"/>
</dbReference>
<dbReference type="FunFam" id="2.40.50.100:FF:000011">
    <property type="entry name" value="Glycine cleavage system H protein"/>
    <property type="match status" value="1"/>
</dbReference>
<dbReference type="Gene3D" id="2.40.50.100">
    <property type="match status" value="1"/>
</dbReference>
<dbReference type="HAMAP" id="MF_00272">
    <property type="entry name" value="GcvH"/>
    <property type="match status" value="1"/>
</dbReference>
<dbReference type="InterPro" id="IPR003016">
    <property type="entry name" value="2-oxoA_DH_lipoyl-BS"/>
</dbReference>
<dbReference type="InterPro" id="IPR000089">
    <property type="entry name" value="Biotin_lipoyl"/>
</dbReference>
<dbReference type="InterPro" id="IPR002930">
    <property type="entry name" value="GCV_H"/>
</dbReference>
<dbReference type="InterPro" id="IPR033753">
    <property type="entry name" value="GCV_H/Fam206"/>
</dbReference>
<dbReference type="InterPro" id="IPR017453">
    <property type="entry name" value="GCV_H_sub"/>
</dbReference>
<dbReference type="InterPro" id="IPR011053">
    <property type="entry name" value="Single_hybrid_motif"/>
</dbReference>
<dbReference type="NCBIfam" id="TIGR00527">
    <property type="entry name" value="gcvH"/>
    <property type="match status" value="1"/>
</dbReference>
<dbReference type="NCBIfam" id="NF002270">
    <property type="entry name" value="PRK01202.1"/>
    <property type="match status" value="1"/>
</dbReference>
<dbReference type="PANTHER" id="PTHR11715">
    <property type="entry name" value="GLYCINE CLEAVAGE SYSTEM H PROTEIN"/>
    <property type="match status" value="1"/>
</dbReference>
<dbReference type="PANTHER" id="PTHR11715:SF3">
    <property type="entry name" value="GLYCINE CLEAVAGE SYSTEM H PROTEIN-RELATED"/>
    <property type="match status" value="1"/>
</dbReference>
<dbReference type="Pfam" id="PF01597">
    <property type="entry name" value="GCV_H"/>
    <property type="match status" value="1"/>
</dbReference>
<dbReference type="SUPFAM" id="SSF51230">
    <property type="entry name" value="Single hybrid motif"/>
    <property type="match status" value="1"/>
</dbReference>
<dbReference type="PROSITE" id="PS50968">
    <property type="entry name" value="BIOTINYL_LIPOYL"/>
    <property type="match status" value="1"/>
</dbReference>
<dbReference type="PROSITE" id="PS00189">
    <property type="entry name" value="LIPOYL"/>
    <property type="match status" value="1"/>
</dbReference>
<comment type="function">
    <text evidence="1">The glycine cleavage system catalyzes the degradation of glycine. The H protein shuttles the methylamine group of glycine from the P protein to the T protein.</text>
</comment>
<comment type="cofactor">
    <cofactor evidence="1">
        <name>(R)-lipoate</name>
        <dbReference type="ChEBI" id="CHEBI:83088"/>
    </cofactor>
    <text evidence="1">Binds 1 lipoyl cofactor covalently.</text>
</comment>
<comment type="subunit">
    <text evidence="1">The glycine cleavage system is composed of four proteins: P, T, L and H.</text>
</comment>
<comment type="similarity">
    <text evidence="1">Belongs to the GcvH family.</text>
</comment>
<reference key="1">
    <citation type="submission" date="2006-08" db="EMBL/GenBank/DDBJ databases">
        <title>Complete sequence of Shewanella sp. MR-4.</title>
        <authorList>
            <consortium name="US DOE Joint Genome Institute"/>
            <person name="Copeland A."/>
            <person name="Lucas S."/>
            <person name="Lapidus A."/>
            <person name="Barry K."/>
            <person name="Detter J.C."/>
            <person name="Glavina del Rio T."/>
            <person name="Hammon N."/>
            <person name="Israni S."/>
            <person name="Dalin E."/>
            <person name="Tice H."/>
            <person name="Pitluck S."/>
            <person name="Kiss H."/>
            <person name="Brettin T."/>
            <person name="Bruce D."/>
            <person name="Han C."/>
            <person name="Tapia R."/>
            <person name="Gilna P."/>
            <person name="Schmutz J."/>
            <person name="Larimer F."/>
            <person name="Land M."/>
            <person name="Hauser L."/>
            <person name="Kyrpides N."/>
            <person name="Mikhailova N."/>
            <person name="Nealson K."/>
            <person name="Konstantinidis K."/>
            <person name="Klappenbach J."/>
            <person name="Tiedje J."/>
            <person name="Richardson P."/>
        </authorList>
    </citation>
    <scope>NUCLEOTIDE SEQUENCE [LARGE SCALE GENOMIC DNA]</scope>
    <source>
        <strain>MR-4</strain>
    </source>
</reference>
<sequence>MSNIPTELKYASSHEWIRKEEDGSYTVGITEHAQELLGDMVFVELPEVGDTVTAGDDCAVAESVKAASDIYAPISGEVIAVNEALEDSPELVNSDAYGEGWFFRVMPSDESEVDALLDAEGYQAVIDEE</sequence>
<gene>
    <name evidence="1" type="primary">gcvH</name>
    <name type="ordered locus">Shewmr4_3330</name>
</gene>
<feature type="chain" id="PRO_0000302434" description="Glycine cleavage system H protein">
    <location>
        <begin position="1"/>
        <end position="129"/>
    </location>
</feature>
<feature type="domain" description="Lipoyl-binding" evidence="2">
    <location>
        <begin position="24"/>
        <end position="106"/>
    </location>
</feature>
<feature type="modified residue" description="N6-lipoyllysine" evidence="1">
    <location>
        <position position="65"/>
    </location>
</feature>
<proteinExistence type="inferred from homology"/>
<name>GCSH_SHESM</name>
<protein>
    <recommendedName>
        <fullName evidence="1">Glycine cleavage system H protein</fullName>
    </recommendedName>
</protein>
<accession>Q0HEX1</accession>